<accession>P0ADN6</accession>
<accession>P39166</accession>
<accession>Q2EEU0</accession>
<accession>Q2M8B4</accession>
<accession>Q8X3Y5</accession>
<proteinExistence type="evidence at protein level"/>
<keyword id="KW-0002">3D-structure</keyword>
<keyword id="KW-0998">Cell outer membrane</keyword>
<keyword id="KW-0449">Lipoprotein</keyword>
<keyword id="KW-0472">Membrane</keyword>
<keyword id="KW-0564">Palmitate</keyword>
<keyword id="KW-1185">Reference proteome</keyword>
<keyword id="KW-0732">Signal</keyword>
<dbReference type="EMBL" id="X66782">
    <property type="status" value="NOT_ANNOTATED_CDS"/>
    <property type="molecule type" value="Genomic_DNA"/>
</dbReference>
<dbReference type="EMBL" id="M87049">
    <property type="status" value="NOT_ANNOTATED_CDS"/>
    <property type="molecule type" value="Genomic_DNA"/>
</dbReference>
<dbReference type="EMBL" id="U00096">
    <property type="protein sequence ID" value="ABD18710.1"/>
    <property type="molecule type" value="Genomic_DNA"/>
</dbReference>
<dbReference type="EMBL" id="AP009048">
    <property type="protein sequence ID" value="BAE77492.1"/>
    <property type="molecule type" value="Genomic_DNA"/>
</dbReference>
<dbReference type="RefSeq" id="WP_000799889.1">
    <property type="nucleotide sequence ID" value="NZ_STEB01000021.1"/>
</dbReference>
<dbReference type="RefSeq" id="YP_588473.1">
    <property type="nucleotide sequence ID" value="NC_000913.3"/>
</dbReference>
<dbReference type="PDB" id="8H1R">
    <property type="method" value="X-ray"/>
    <property type="resolution" value="2.98 A"/>
    <property type="chains" value="C/F=1-67"/>
</dbReference>
<dbReference type="PDBsum" id="8H1R"/>
<dbReference type="SMR" id="P0ADN6"/>
<dbReference type="BioGRID" id="4262612">
    <property type="interactions" value="96"/>
</dbReference>
<dbReference type="BioGRID" id="853418">
    <property type="interactions" value="1"/>
</dbReference>
<dbReference type="FunCoup" id="P0ADN6">
    <property type="interactions" value="11"/>
</dbReference>
<dbReference type="IntAct" id="P0ADN6">
    <property type="interactions" value="1"/>
</dbReference>
<dbReference type="STRING" id="511145.b4558"/>
<dbReference type="jPOST" id="P0ADN6"/>
<dbReference type="PaxDb" id="511145-b4558"/>
<dbReference type="EnsemblBacteria" id="ABD18710">
    <property type="protein sequence ID" value="ABD18710"/>
    <property type="gene ID" value="b4558"/>
</dbReference>
<dbReference type="GeneID" id="1450304"/>
<dbReference type="KEGG" id="ecj:JW3781"/>
<dbReference type="KEGG" id="eco:b4558"/>
<dbReference type="KEGG" id="ecoc:C3026_20615"/>
<dbReference type="PATRIC" id="fig|1411691.4.peg.2899"/>
<dbReference type="EchoBASE" id="EB2257"/>
<dbReference type="eggNOG" id="COG5567">
    <property type="taxonomic scope" value="Bacteria"/>
</dbReference>
<dbReference type="HOGENOM" id="CLU_200497_0_0_6"/>
<dbReference type="InParanoid" id="P0ADN6"/>
<dbReference type="OMA" id="GFNEMKT"/>
<dbReference type="OrthoDB" id="7066359at2"/>
<dbReference type="PhylomeDB" id="P0ADN6"/>
<dbReference type="BioCyc" id="EcoCyc:MONOMER0-2693"/>
<dbReference type="PRO" id="PR:P0ADN6"/>
<dbReference type="Proteomes" id="UP000000625">
    <property type="component" value="Chromosome"/>
</dbReference>
<dbReference type="GO" id="GO:0009279">
    <property type="term" value="C:cell outer membrane"/>
    <property type="evidence" value="ECO:0007669"/>
    <property type="project" value="UniProtKB-SubCell"/>
</dbReference>
<dbReference type="GO" id="GO:0043165">
    <property type="term" value="P:Gram-negative-bacterium-type cell outer membrane assembly"/>
    <property type="evidence" value="ECO:0000314"/>
    <property type="project" value="EcoCyc"/>
</dbReference>
<dbReference type="InterPro" id="IPR032831">
    <property type="entry name" value="LptM_cons"/>
</dbReference>
<dbReference type="NCBIfam" id="NF047847">
    <property type="entry name" value="SS_mature_LptM"/>
    <property type="match status" value="1"/>
</dbReference>
<dbReference type="Pfam" id="PF13627">
    <property type="entry name" value="LptM_cons"/>
    <property type="match status" value="1"/>
</dbReference>
<dbReference type="PROSITE" id="PS51257">
    <property type="entry name" value="PROKAR_LIPOPROTEIN"/>
    <property type="match status" value="1"/>
</dbReference>
<evidence type="ECO:0000255" key="1">
    <source>
        <dbReference type="PROSITE-ProRule" id="PRU00303"/>
    </source>
</evidence>
<evidence type="ECO:0000256" key="2">
    <source>
        <dbReference type="SAM" id="MobiDB-lite"/>
    </source>
</evidence>
<evidence type="ECO:0000269" key="3">
    <source>
    </source>
</evidence>
<evidence type="ECO:0000303" key="4">
    <source>
    </source>
</evidence>
<evidence type="ECO:0000305" key="5"/>
<evidence type="ECO:0000305" key="6">
    <source>
    </source>
</evidence>
<evidence type="ECO:0007744" key="7">
    <source>
        <dbReference type="PDB" id="8H1R"/>
    </source>
</evidence>
<protein>
    <recommendedName>
        <fullName evidence="5">LPS-assembly lipoprotein LptM</fullName>
    </recommendedName>
    <alternativeName>
        <fullName evidence="4">LptD oxidative maturation-associated lipoprotein</fullName>
    </alternativeName>
</protein>
<name>LPTM_ECOLI</name>
<sequence>MKNVFKALTVLLTLFSLTGCGLKGPLYFPPADKNAPPPTKPVETQTQSTVPDKNDRATGDGPSQVNY</sequence>
<feature type="signal peptide" evidence="1">
    <location>
        <begin position="1"/>
        <end position="19"/>
    </location>
</feature>
<feature type="chain" id="PRO_0000013931" description="LPS-assembly lipoprotein LptM">
    <location>
        <begin position="20"/>
        <end position="67"/>
    </location>
</feature>
<feature type="region of interest" description="Disordered" evidence="2">
    <location>
        <begin position="26"/>
        <end position="67"/>
    </location>
</feature>
<feature type="compositionally biased region" description="Polar residues" evidence="2">
    <location>
        <begin position="42"/>
        <end position="51"/>
    </location>
</feature>
<feature type="lipid moiety-binding region" description="N-palmitoyl cysteine" evidence="1">
    <location>
        <position position="20"/>
    </location>
</feature>
<feature type="lipid moiety-binding region" description="S-diacylglycerol cysteine" evidence="1">
    <location>
        <position position="20"/>
    </location>
</feature>
<feature type="sequence conflict" description="In Ref. 1." evidence="5" ref="1">
    <original>DGPSQVNY</original>
    <variation>MVHPR</variation>
    <location>
        <begin position="60"/>
        <end position="67"/>
    </location>
</feature>
<comment type="function">
    <text evidence="3">Component of the lipopolysaccharide (LPS) transport (Lpt) pathway that promotes efficient assembly of the outer membrane LPS translocon (LptDE) by the BAM complex (PubMed:37821449). Facilitates oxidative maturation of LptD by stabilizing a conformation of the LPS translocon in which LptD can efficiently acquire native disulfide bonds, thereby activating the LPS translocon (PubMed:37821449). Might stabilize an active conformation of the LPS translocon by mimicking its natural substrate (PubMed:37821449).</text>
</comment>
<comment type="subunit">
    <text evidence="3">Interacts with the outer membrane embedded portion of the LPS translocon formed by LptD and LptE (LptDE) (PubMed:37821449). LptM binds to sites in both LptD and LptE, forming a 1:1:1 heterotrimeric complex (PubMed:37821449).</text>
</comment>
<comment type="subcellular location">
    <subcellularLocation>
        <location evidence="6">Cell outer membrane</location>
        <topology evidence="1">Lipid-anchor</topology>
    </subcellularLocation>
</comment>
<comment type="disruption phenotype">
    <text evidence="3">Inactivation of the gene impairs LptD oxidative maturation and causes the accumulation of intermediate oxidation forms (PubMed:37821449). It prolongs the residence of LptD and LptE at the BAM complex (PubMed:37821449).</text>
</comment>
<comment type="similarity">
    <text evidence="5">Belongs to the LptM family.</text>
</comment>
<gene>
    <name evidence="4" type="primary">lptM</name>
    <name type="synonym">yifL</name>
    <name type="ordered locus">b4558</name>
    <name type="ordered locus">JW3781</name>
</gene>
<reference key="1">
    <citation type="submission" date="1992-06" db="EMBL/GenBank/DDBJ databases">
        <authorList>
            <person name="Glaser P."/>
            <person name="Sismeiro O."/>
            <person name="Danchin A."/>
        </authorList>
    </citation>
    <scope>NUCLEOTIDE SEQUENCE [GENOMIC DNA]</scope>
    <source>
        <strain>K12</strain>
    </source>
</reference>
<reference key="2">
    <citation type="journal article" date="1992" name="Science">
        <title>Analysis of the Escherichia coli genome: DNA sequence of the region from 84.5 to 86.5 minutes.</title>
        <authorList>
            <person name="Daniels D.L."/>
            <person name="Plunkett G. III"/>
            <person name="Burland V.D."/>
            <person name="Blattner F.R."/>
        </authorList>
    </citation>
    <scope>NUCLEOTIDE SEQUENCE [LARGE SCALE GENOMIC DNA]</scope>
    <source>
        <strain>K12 / MG1655 / ATCC 47076</strain>
    </source>
</reference>
<reference key="3">
    <citation type="journal article" date="1997" name="Science">
        <title>The complete genome sequence of Escherichia coli K-12.</title>
        <authorList>
            <person name="Blattner F.R."/>
            <person name="Plunkett G. III"/>
            <person name="Bloch C.A."/>
            <person name="Perna N.T."/>
            <person name="Burland V."/>
            <person name="Riley M."/>
            <person name="Collado-Vides J."/>
            <person name="Glasner J.D."/>
            <person name="Rode C.K."/>
            <person name="Mayhew G.F."/>
            <person name="Gregor J."/>
            <person name="Davis N.W."/>
            <person name="Kirkpatrick H.A."/>
            <person name="Goeden M.A."/>
            <person name="Rose D.J."/>
            <person name="Mau B."/>
            <person name="Shao Y."/>
        </authorList>
    </citation>
    <scope>NUCLEOTIDE SEQUENCE [LARGE SCALE GENOMIC DNA]</scope>
    <source>
        <strain>K12 / MG1655 / ATCC 47076</strain>
    </source>
</reference>
<reference key="4">
    <citation type="journal article" date="2006" name="Mol. Syst. Biol.">
        <title>Highly accurate genome sequences of Escherichia coli K-12 strains MG1655 and W3110.</title>
        <authorList>
            <person name="Hayashi K."/>
            <person name="Morooka N."/>
            <person name="Yamamoto Y."/>
            <person name="Fujita K."/>
            <person name="Isono K."/>
            <person name="Choi S."/>
            <person name="Ohtsubo E."/>
            <person name="Baba T."/>
            <person name="Wanner B.L."/>
            <person name="Mori H."/>
            <person name="Horiuchi T."/>
        </authorList>
    </citation>
    <scope>NUCLEOTIDE SEQUENCE [LARGE SCALE GENOMIC DNA]</scope>
    <source>
        <strain>K12 / W3110 / ATCC 27325 / DSM 5911</strain>
    </source>
</reference>
<reference key="5">
    <citation type="journal article" date="1994" name="Nucleic Acids Res.">
        <title>Intrinsic and extrinsic approaches for detecting genes in a bacterial genome.</title>
        <authorList>
            <person name="Borodovsky M."/>
            <person name="Rudd K.E."/>
            <person name="Koonin E.V."/>
        </authorList>
    </citation>
    <scope>IDENTIFICATION</scope>
</reference>
<reference key="6">
    <citation type="journal article" date="2023" name="Nat. Commun.">
        <title>LptM promotes oxidative maturation of the lipopolysaccharide translocon by substrate binding mimicry.</title>
        <authorList>
            <person name="Yang Y."/>
            <person name="Chen H."/>
            <person name="Corey R.A."/>
            <person name="Morales V."/>
            <person name="Quentin Y."/>
            <person name="Froment C."/>
            <person name="Caumont-Sarcos A."/>
            <person name="Albenne C."/>
            <person name="Burlet-Schiltz O."/>
            <person name="Ranava D."/>
            <person name="Stansfeld P.J."/>
            <person name="Marcoux J."/>
            <person name="Ieva R."/>
        </authorList>
    </citation>
    <scope>FUNCTION</scope>
    <scope>SUBUNIT</scope>
    <scope>INTERACTION WITH LPTD AND LPTE</scope>
    <scope>DISRUPTION PHENOTYPE</scope>
    <source>
        <strain>K12 / BW25113</strain>
    </source>
</reference>
<reference evidence="7" key="7">
    <citation type="submission" date="2022-10" db="PDB data bank">
        <title>Lipoprotein sorting to the cell surface via a crosstalk between the Lpt and Lol pathways during outer membrane biogenesis.</title>
        <authorList>
            <person name="Luo Q."/>
            <person name="Wang C."/>
            <person name="Qiao S."/>
        </authorList>
    </citation>
    <scope>X-RAY CRYSTALLOGRAPHY (2.98 ANGSTROMS) IN COMPLEX WITH P.AERUGINOSA LPTD AND LPTE</scope>
</reference>
<organism>
    <name type="scientific">Escherichia coli (strain K12)</name>
    <dbReference type="NCBI Taxonomy" id="83333"/>
    <lineage>
        <taxon>Bacteria</taxon>
        <taxon>Pseudomonadati</taxon>
        <taxon>Pseudomonadota</taxon>
        <taxon>Gammaproteobacteria</taxon>
        <taxon>Enterobacterales</taxon>
        <taxon>Enterobacteriaceae</taxon>
        <taxon>Escherichia</taxon>
    </lineage>
</organism>